<sequence>MSDILNKIEAYKREEIAAAKRERPLAALQAAARAAPPPRGFVSALRAKLADGDYALIAEIKKASPSKGLIRPDFDPPALAKAYQQGGAACLSVLTDTPSFQGHLDYLVAARAAVSLPALRKDFMYDTYQVVEARAHGADCILIIMAALDDSEARDIEDAALDLGMDVLLEVHNHAELDRALALRSPMIGVNNRNLRTFEVTLATSEALAPLIPSDRLMVGESGIFTPDDLARLARVGMSTFLVGESLMRQQDVAAATRTLLARAA</sequence>
<gene>
    <name evidence="1" type="primary">trpC</name>
    <name type="ordered locus">RPD_2829</name>
</gene>
<name>TRPC_RHOPS</name>
<proteinExistence type="inferred from homology"/>
<accession>Q136D2</accession>
<dbReference type="EC" id="4.1.1.48" evidence="1"/>
<dbReference type="EMBL" id="CP000283">
    <property type="protein sequence ID" value="ABE40057.1"/>
    <property type="molecule type" value="Genomic_DNA"/>
</dbReference>
<dbReference type="SMR" id="Q136D2"/>
<dbReference type="STRING" id="316057.RPD_2829"/>
<dbReference type="KEGG" id="rpd:RPD_2829"/>
<dbReference type="eggNOG" id="COG0134">
    <property type="taxonomic scope" value="Bacteria"/>
</dbReference>
<dbReference type="HOGENOM" id="CLU_034247_2_0_5"/>
<dbReference type="BioCyc" id="RPAL316057:RPD_RS14210-MONOMER"/>
<dbReference type="UniPathway" id="UPA00035">
    <property type="reaction ID" value="UER00043"/>
</dbReference>
<dbReference type="Proteomes" id="UP000001818">
    <property type="component" value="Chromosome"/>
</dbReference>
<dbReference type="GO" id="GO:0004425">
    <property type="term" value="F:indole-3-glycerol-phosphate synthase activity"/>
    <property type="evidence" value="ECO:0007669"/>
    <property type="project" value="UniProtKB-UniRule"/>
</dbReference>
<dbReference type="GO" id="GO:0004640">
    <property type="term" value="F:phosphoribosylanthranilate isomerase activity"/>
    <property type="evidence" value="ECO:0007669"/>
    <property type="project" value="TreeGrafter"/>
</dbReference>
<dbReference type="GO" id="GO:0000162">
    <property type="term" value="P:L-tryptophan biosynthetic process"/>
    <property type="evidence" value="ECO:0007669"/>
    <property type="project" value="UniProtKB-UniRule"/>
</dbReference>
<dbReference type="CDD" id="cd00331">
    <property type="entry name" value="IGPS"/>
    <property type="match status" value="1"/>
</dbReference>
<dbReference type="FunFam" id="3.20.20.70:FF:000024">
    <property type="entry name" value="Indole-3-glycerol phosphate synthase"/>
    <property type="match status" value="1"/>
</dbReference>
<dbReference type="Gene3D" id="3.20.20.70">
    <property type="entry name" value="Aldolase class I"/>
    <property type="match status" value="1"/>
</dbReference>
<dbReference type="HAMAP" id="MF_00134_B">
    <property type="entry name" value="IGPS_B"/>
    <property type="match status" value="1"/>
</dbReference>
<dbReference type="InterPro" id="IPR013785">
    <property type="entry name" value="Aldolase_TIM"/>
</dbReference>
<dbReference type="InterPro" id="IPR045186">
    <property type="entry name" value="Indole-3-glycerol_P_synth"/>
</dbReference>
<dbReference type="InterPro" id="IPR013798">
    <property type="entry name" value="Indole-3-glycerol_P_synth_dom"/>
</dbReference>
<dbReference type="InterPro" id="IPR001468">
    <property type="entry name" value="Indole-3-GlycerolPSynthase_CS"/>
</dbReference>
<dbReference type="InterPro" id="IPR011060">
    <property type="entry name" value="RibuloseP-bd_barrel"/>
</dbReference>
<dbReference type="NCBIfam" id="NF001370">
    <property type="entry name" value="PRK00278.1-2"/>
    <property type="match status" value="1"/>
</dbReference>
<dbReference type="NCBIfam" id="NF001373">
    <property type="entry name" value="PRK00278.1-6"/>
    <property type="match status" value="1"/>
</dbReference>
<dbReference type="NCBIfam" id="NF001377">
    <property type="entry name" value="PRK00278.2-4"/>
    <property type="match status" value="1"/>
</dbReference>
<dbReference type="PANTHER" id="PTHR22854:SF2">
    <property type="entry name" value="INDOLE-3-GLYCEROL-PHOSPHATE SYNTHASE"/>
    <property type="match status" value="1"/>
</dbReference>
<dbReference type="PANTHER" id="PTHR22854">
    <property type="entry name" value="TRYPTOPHAN BIOSYNTHESIS PROTEIN"/>
    <property type="match status" value="1"/>
</dbReference>
<dbReference type="Pfam" id="PF00218">
    <property type="entry name" value="IGPS"/>
    <property type="match status" value="1"/>
</dbReference>
<dbReference type="SUPFAM" id="SSF51366">
    <property type="entry name" value="Ribulose-phoshate binding barrel"/>
    <property type="match status" value="1"/>
</dbReference>
<dbReference type="PROSITE" id="PS00614">
    <property type="entry name" value="IGPS"/>
    <property type="match status" value="1"/>
</dbReference>
<protein>
    <recommendedName>
        <fullName evidence="1">Indole-3-glycerol phosphate synthase</fullName>
        <shortName evidence="1">IGPS</shortName>
        <ecNumber evidence="1">4.1.1.48</ecNumber>
    </recommendedName>
</protein>
<feature type="chain" id="PRO_1000018546" description="Indole-3-glycerol phosphate synthase">
    <location>
        <begin position="1"/>
        <end position="265"/>
    </location>
</feature>
<comment type="catalytic activity">
    <reaction evidence="1">
        <text>1-(2-carboxyphenylamino)-1-deoxy-D-ribulose 5-phosphate + H(+) = (1S,2R)-1-C-(indol-3-yl)glycerol 3-phosphate + CO2 + H2O</text>
        <dbReference type="Rhea" id="RHEA:23476"/>
        <dbReference type="ChEBI" id="CHEBI:15377"/>
        <dbReference type="ChEBI" id="CHEBI:15378"/>
        <dbReference type="ChEBI" id="CHEBI:16526"/>
        <dbReference type="ChEBI" id="CHEBI:58613"/>
        <dbReference type="ChEBI" id="CHEBI:58866"/>
        <dbReference type="EC" id="4.1.1.48"/>
    </reaction>
</comment>
<comment type="pathway">
    <text evidence="1">Amino-acid biosynthesis; L-tryptophan biosynthesis; L-tryptophan from chorismate: step 4/5.</text>
</comment>
<comment type="similarity">
    <text evidence="1">Belongs to the TrpC family.</text>
</comment>
<keyword id="KW-0028">Amino-acid biosynthesis</keyword>
<keyword id="KW-0057">Aromatic amino acid biosynthesis</keyword>
<keyword id="KW-0210">Decarboxylase</keyword>
<keyword id="KW-0456">Lyase</keyword>
<keyword id="KW-0822">Tryptophan biosynthesis</keyword>
<organism>
    <name type="scientific">Rhodopseudomonas palustris (strain BisB5)</name>
    <dbReference type="NCBI Taxonomy" id="316057"/>
    <lineage>
        <taxon>Bacteria</taxon>
        <taxon>Pseudomonadati</taxon>
        <taxon>Pseudomonadota</taxon>
        <taxon>Alphaproteobacteria</taxon>
        <taxon>Hyphomicrobiales</taxon>
        <taxon>Nitrobacteraceae</taxon>
        <taxon>Rhodopseudomonas</taxon>
    </lineage>
</organism>
<reference key="1">
    <citation type="submission" date="2006-03" db="EMBL/GenBank/DDBJ databases">
        <title>Complete sequence of Rhodopseudomonas palustris BisB5.</title>
        <authorList>
            <consortium name="US DOE Joint Genome Institute"/>
            <person name="Copeland A."/>
            <person name="Lucas S."/>
            <person name="Lapidus A."/>
            <person name="Barry K."/>
            <person name="Detter J.C."/>
            <person name="Glavina del Rio T."/>
            <person name="Hammon N."/>
            <person name="Israni S."/>
            <person name="Dalin E."/>
            <person name="Tice H."/>
            <person name="Pitluck S."/>
            <person name="Chain P."/>
            <person name="Malfatti S."/>
            <person name="Shin M."/>
            <person name="Vergez L."/>
            <person name="Schmutz J."/>
            <person name="Larimer F."/>
            <person name="Land M."/>
            <person name="Hauser L."/>
            <person name="Pelletier D.A."/>
            <person name="Kyrpides N."/>
            <person name="Lykidis A."/>
            <person name="Oda Y."/>
            <person name="Harwood C.S."/>
            <person name="Richardson P."/>
        </authorList>
    </citation>
    <scope>NUCLEOTIDE SEQUENCE [LARGE SCALE GENOMIC DNA]</scope>
    <source>
        <strain>BisB5</strain>
    </source>
</reference>
<evidence type="ECO:0000255" key="1">
    <source>
        <dbReference type="HAMAP-Rule" id="MF_00134"/>
    </source>
</evidence>